<comment type="similarity">
    <text evidence="2">Belongs to the universal ribosomal protein uS9 family.</text>
</comment>
<gene>
    <name type="primary">rps9</name>
    <name type="ordered locus">PH1633</name>
</gene>
<reference key="1">
    <citation type="journal article" date="1998" name="DNA Res.">
        <title>Complete sequence and gene organization of the genome of a hyper-thermophilic archaebacterium, Pyrococcus horikoshii OT3.</title>
        <authorList>
            <person name="Kawarabayasi Y."/>
            <person name="Sawada M."/>
            <person name="Horikawa H."/>
            <person name="Haikawa Y."/>
            <person name="Hino Y."/>
            <person name="Yamamoto S."/>
            <person name="Sekine M."/>
            <person name="Baba S."/>
            <person name="Kosugi H."/>
            <person name="Hosoyama A."/>
            <person name="Nagai Y."/>
            <person name="Sakai M."/>
            <person name="Ogura K."/>
            <person name="Otsuka R."/>
            <person name="Nakazawa H."/>
            <person name="Takamiya M."/>
            <person name="Ohfuku Y."/>
            <person name="Funahashi T."/>
            <person name="Tanaka T."/>
            <person name="Kudoh Y."/>
            <person name="Yamazaki J."/>
            <person name="Kushida N."/>
            <person name="Oguchi A."/>
            <person name="Aoki K."/>
            <person name="Yoshizawa T."/>
            <person name="Nakamura Y."/>
            <person name="Robb F.T."/>
            <person name="Horikoshi K."/>
            <person name="Masuchi Y."/>
            <person name="Shizuya H."/>
            <person name="Kikuchi H."/>
        </authorList>
    </citation>
    <scope>NUCLEOTIDE SEQUENCE [LARGE SCALE GENOMIC DNA]</scope>
    <source>
        <strain>ATCC 700860 / DSM 12428 / JCM 9974 / NBRC 100139 / OT-3</strain>
    </source>
</reference>
<protein>
    <recommendedName>
        <fullName evidence="2">Small ribosomal subunit protein uS9</fullName>
    </recommendedName>
    <alternativeName>
        <fullName>30S ribosomal protein S9</fullName>
    </alternativeName>
</protein>
<accession>O59299</accession>
<organism>
    <name type="scientific">Pyrococcus horikoshii (strain ATCC 700860 / DSM 12428 / JCM 9974 / NBRC 100139 / OT-3)</name>
    <dbReference type="NCBI Taxonomy" id="70601"/>
    <lineage>
        <taxon>Archaea</taxon>
        <taxon>Methanobacteriati</taxon>
        <taxon>Methanobacteriota</taxon>
        <taxon>Thermococci</taxon>
        <taxon>Thermococcales</taxon>
        <taxon>Thermococcaceae</taxon>
        <taxon>Pyrococcus</taxon>
    </lineage>
</organism>
<sequence>MRIIQTTGKRKTAIARAVIREGRGRVRINGKPVEIIEPEIARFTILEPLILAGEEIWNSVDIDVKVQGGGFMGQAEAARIAIARALVEWTGDMNLKEKFIKYDRTMLVGDPRRTEPHKPNRSTKGPRAKRQKSYR</sequence>
<feature type="chain" id="PRO_0000111472" description="Small ribosomal subunit protein uS9">
    <location>
        <begin position="1"/>
        <end position="135"/>
    </location>
</feature>
<feature type="region of interest" description="Disordered" evidence="1">
    <location>
        <begin position="108"/>
        <end position="135"/>
    </location>
</feature>
<feature type="compositionally biased region" description="Basic and acidic residues" evidence="1">
    <location>
        <begin position="108"/>
        <end position="118"/>
    </location>
</feature>
<feature type="compositionally biased region" description="Basic residues" evidence="1">
    <location>
        <begin position="119"/>
        <end position="135"/>
    </location>
</feature>
<keyword id="KW-0687">Ribonucleoprotein</keyword>
<keyword id="KW-0689">Ribosomal protein</keyword>
<name>RS9_PYRHO</name>
<proteinExistence type="inferred from homology"/>
<dbReference type="EMBL" id="BA000001">
    <property type="protein sequence ID" value="BAA30745.1"/>
    <property type="molecule type" value="Genomic_DNA"/>
</dbReference>
<dbReference type="PIR" id="A71043">
    <property type="entry name" value="A71043"/>
</dbReference>
<dbReference type="RefSeq" id="WP_010885704.1">
    <property type="nucleotide sequence ID" value="NC_000961.1"/>
</dbReference>
<dbReference type="SMR" id="O59299"/>
<dbReference type="STRING" id="70601.gene:9378624"/>
<dbReference type="EnsemblBacteria" id="BAA30745">
    <property type="protein sequence ID" value="BAA30745"/>
    <property type="gene ID" value="BAA30745"/>
</dbReference>
<dbReference type="GeneID" id="1442484"/>
<dbReference type="KEGG" id="pho:PH1633"/>
<dbReference type="eggNOG" id="arCOG04243">
    <property type="taxonomic scope" value="Archaea"/>
</dbReference>
<dbReference type="OrthoDB" id="52677at2157"/>
<dbReference type="Proteomes" id="UP000000752">
    <property type="component" value="Chromosome"/>
</dbReference>
<dbReference type="GO" id="GO:0022627">
    <property type="term" value="C:cytosolic small ribosomal subunit"/>
    <property type="evidence" value="ECO:0007669"/>
    <property type="project" value="TreeGrafter"/>
</dbReference>
<dbReference type="GO" id="GO:0003723">
    <property type="term" value="F:RNA binding"/>
    <property type="evidence" value="ECO:0007669"/>
    <property type="project" value="TreeGrafter"/>
</dbReference>
<dbReference type="GO" id="GO:0003735">
    <property type="term" value="F:structural constituent of ribosome"/>
    <property type="evidence" value="ECO:0007669"/>
    <property type="project" value="InterPro"/>
</dbReference>
<dbReference type="GO" id="GO:0000462">
    <property type="term" value="P:maturation of SSU-rRNA from tricistronic rRNA transcript (SSU-rRNA, 5.8S rRNA, LSU-rRNA)"/>
    <property type="evidence" value="ECO:0007669"/>
    <property type="project" value="TreeGrafter"/>
</dbReference>
<dbReference type="GO" id="GO:0006412">
    <property type="term" value="P:translation"/>
    <property type="evidence" value="ECO:0007669"/>
    <property type="project" value="UniProtKB-UniRule"/>
</dbReference>
<dbReference type="FunFam" id="3.30.230.10:FF:000051">
    <property type="entry name" value="30S ribosomal protein S9"/>
    <property type="match status" value="1"/>
</dbReference>
<dbReference type="Gene3D" id="3.30.230.10">
    <property type="match status" value="1"/>
</dbReference>
<dbReference type="HAMAP" id="MF_00532_A">
    <property type="entry name" value="Ribosomal_uS9_A"/>
    <property type="match status" value="1"/>
</dbReference>
<dbReference type="InterPro" id="IPR020568">
    <property type="entry name" value="Ribosomal_Su5_D2-typ_SF"/>
</dbReference>
<dbReference type="InterPro" id="IPR000754">
    <property type="entry name" value="Ribosomal_uS9"/>
</dbReference>
<dbReference type="InterPro" id="IPR019958">
    <property type="entry name" value="Ribosomal_uS9_archaeal"/>
</dbReference>
<dbReference type="InterPro" id="IPR020574">
    <property type="entry name" value="Ribosomal_uS9_CS"/>
</dbReference>
<dbReference type="InterPro" id="IPR014721">
    <property type="entry name" value="Ribsml_uS5_D2-typ_fold_subgr"/>
</dbReference>
<dbReference type="NCBIfam" id="NF001749">
    <property type="entry name" value="PRK00474.1"/>
    <property type="match status" value="1"/>
</dbReference>
<dbReference type="NCBIfam" id="TIGR03627">
    <property type="entry name" value="uS9_arch"/>
    <property type="match status" value="1"/>
</dbReference>
<dbReference type="PANTHER" id="PTHR21569:SF16">
    <property type="entry name" value="RIBOSOMAL PROTEIN S16"/>
    <property type="match status" value="1"/>
</dbReference>
<dbReference type="PANTHER" id="PTHR21569">
    <property type="entry name" value="RIBOSOMAL PROTEIN S9"/>
    <property type="match status" value="1"/>
</dbReference>
<dbReference type="Pfam" id="PF00380">
    <property type="entry name" value="Ribosomal_S9"/>
    <property type="match status" value="1"/>
</dbReference>
<dbReference type="SUPFAM" id="SSF54211">
    <property type="entry name" value="Ribosomal protein S5 domain 2-like"/>
    <property type="match status" value="1"/>
</dbReference>
<dbReference type="PROSITE" id="PS00360">
    <property type="entry name" value="RIBOSOMAL_S9"/>
    <property type="match status" value="1"/>
</dbReference>
<evidence type="ECO:0000256" key="1">
    <source>
        <dbReference type="SAM" id="MobiDB-lite"/>
    </source>
</evidence>
<evidence type="ECO:0000305" key="2"/>